<sequence length="137" mass="15788">MKKKKTYGEVYALGQYISMSAPKARRVIDQIRGRSYEETLMLLALMPYRACDPILKLVNSAAANARHNMSFNEATLVISKAEVNEGTTVKKLKPRARGRSYPIRRPTCHIRIVLQDTSFDEFEEDFFSLKKDAWEKK</sequence>
<reference key="1">
    <citation type="journal article" date="2000" name="Mol. Gen. Genet.">
        <title>Complete nucleotide sequence of the Oenothera elata plastid chromosome, representing plastome I of the five distinguishable Euoenothera plastomes.</title>
        <authorList>
            <person name="Hupfer H."/>
            <person name="Swiatek M."/>
            <person name="Hornung S."/>
            <person name="Herrmann R.G."/>
            <person name="Maier R.M."/>
            <person name="Chiu W.-L."/>
            <person name="Sears B."/>
        </authorList>
    </citation>
    <scope>NUCLEOTIDE SEQUENCE [LARGE SCALE GENOMIC DNA]</scope>
    <source>
        <strain>cv. Johansen</strain>
    </source>
</reference>
<reference key="2">
    <citation type="journal article" date="2008" name="Nucleic Acids Res.">
        <title>The complete nucleotide sequences of the five genetically distinct plastid genomes of Oenothera, subsection Oenothera: I. Sequence evaluation and plastome evolution.</title>
        <authorList>
            <person name="Greiner S."/>
            <person name="Wang X."/>
            <person name="Rauwolf U."/>
            <person name="Silber M.V."/>
            <person name="Mayer K."/>
            <person name="Meurer J."/>
            <person name="Haberer G."/>
            <person name="Herrmann R.G."/>
        </authorList>
    </citation>
    <scope>SEQUENCE REVISION TO 19-21</scope>
</reference>
<geneLocation type="chloroplast"/>
<feature type="chain" id="PRO_0000125313" description="Large ribosomal subunit protein uL22c">
    <location>
        <begin position="1"/>
        <end position="137"/>
    </location>
</feature>
<keyword id="KW-0150">Chloroplast</keyword>
<keyword id="KW-0934">Plastid</keyword>
<keyword id="KW-0687">Ribonucleoprotein</keyword>
<keyword id="KW-0689">Ribosomal protein</keyword>
<keyword id="KW-0694">RNA-binding</keyword>
<keyword id="KW-0699">rRNA-binding</keyword>
<comment type="function">
    <text evidence="1">This protein binds specifically to 23S rRNA.</text>
</comment>
<comment type="function">
    <text evidence="1">The globular domain of the protein is located near the polypeptide exit tunnel on the outside of the subunit, while an extended beta-hairpin is found that lines the wall of the exit tunnel in the center of the 70S ribosome.</text>
</comment>
<comment type="subunit">
    <text evidence="1">Part of the 50S ribosomal subunit.</text>
</comment>
<comment type="subcellular location">
    <subcellularLocation>
        <location>Plastid</location>
        <location>Chloroplast</location>
    </subcellularLocation>
</comment>
<comment type="similarity">
    <text evidence="2">Belongs to the universal ribosomal protein uL22 family.</text>
</comment>
<name>RK22_OENEH</name>
<proteinExistence type="inferred from homology"/>
<protein>
    <recommendedName>
        <fullName evidence="2">Large ribosomal subunit protein uL22c</fullName>
    </recommendedName>
    <alternativeName>
        <fullName>50S ribosomal protein L22, chloroplastic</fullName>
    </alternativeName>
</protein>
<gene>
    <name type="primary">rpl22</name>
</gene>
<evidence type="ECO:0000250" key="1"/>
<evidence type="ECO:0000305" key="2"/>
<organism>
    <name type="scientific">Oenothera elata subsp. hookeri</name>
    <name type="common">Hooker's evening primrose</name>
    <name type="synonym">Oenothera hookeri</name>
    <dbReference type="NCBI Taxonomy" id="85636"/>
    <lineage>
        <taxon>Eukaryota</taxon>
        <taxon>Viridiplantae</taxon>
        <taxon>Streptophyta</taxon>
        <taxon>Embryophyta</taxon>
        <taxon>Tracheophyta</taxon>
        <taxon>Spermatophyta</taxon>
        <taxon>Magnoliopsida</taxon>
        <taxon>eudicotyledons</taxon>
        <taxon>Gunneridae</taxon>
        <taxon>Pentapetalae</taxon>
        <taxon>rosids</taxon>
        <taxon>malvids</taxon>
        <taxon>Myrtales</taxon>
        <taxon>Onagraceae</taxon>
        <taxon>Onagroideae</taxon>
        <taxon>Onagreae</taxon>
        <taxon>Oenothera</taxon>
    </lineage>
</organism>
<dbReference type="EMBL" id="AJ271079">
    <property type="protein sequence ID" value="CAB67199.2"/>
    <property type="molecule type" value="Genomic_DNA"/>
</dbReference>
<dbReference type="RefSeq" id="NP_084732.2">
    <property type="nucleotide sequence ID" value="NC_002693.2"/>
</dbReference>
<dbReference type="SMR" id="Q9MTI6"/>
<dbReference type="GeneID" id="802772"/>
<dbReference type="GO" id="GO:0009507">
    <property type="term" value="C:chloroplast"/>
    <property type="evidence" value="ECO:0007669"/>
    <property type="project" value="UniProtKB-SubCell"/>
</dbReference>
<dbReference type="GO" id="GO:0015934">
    <property type="term" value="C:large ribosomal subunit"/>
    <property type="evidence" value="ECO:0007669"/>
    <property type="project" value="InterPro"/>
</dbReference>
<dbReference type="GO" id="GO:0019843">
    <property type="term" value="F:rRNA binding"/>
    <property type="evidence" value="ECO:0007669"/>
    <property type="project" value="UniProtKB-UniRule"/>
</dbReference>
<dbReference type="GO" id="GO:0003735">
    <property type="term" value="F:structural constituent of ribosome"/>
    <property type="evidence" value="ECO:0007669"/>
    <property type="project" value="InterPro"/>
</dbReference>
<dbReference type="GO" id="GO:0006412">
    <property type="term" value="P:translation"/>
    <property type="evidence" value="ECO:0007669"/>
    <property type="project" value="UniProtKB-UniRule"/>
</dbReference>
<dbReference type="CDD" id="cd00336">
    <property type="entry name" value="Ribosomal_L22"/>
    <property type="match status" value="1"/>
</dbReference>
<dbReference type="FunFam" id="3.90.470.10:FF:000006">
    <property type="entry name" value="50S ribosomal protein L22, chloroplastic"/>
    <property type="match status" value="1"/>
</dbReference>
<dbReference type="Gene3D" id="3.90.470.10">
    <property type="entry name" value="Ribosomal protein L22/L17"/>
    <property type="match status" value="1"/>
</dbReference>
<dbReference type="HAMAP" id="MF_01331_B">
    <property type="entry name" value="Ribosomal_uL22_B"/>
    <property type="match status" value="1"/>
</dbReference>
<dbReference type="InterPro" id="IPR001063">
    <property type="entry name" value="Ribosomal_uL22"/>
</dbReference>
<dbReference type="InterPro" id="IPR005727">
    <property type="entry name" value="Ribosomal_uL22_bac/chlpt-type"/>
</dbReference>
<dbReference type="InterPro" id="IPR047867">
    <property type="entry name" value="Ribosomal_uL22_bac/org-type"/>
</dbReference>
<dbReference type="InterPro" id="IPR018260">
    <property type="entry name" value="Ribosomal_uL22_CS"/>
</dbReference>
<dbReference type="InterPro" id="IPR036394">
    <property type="entry name" value="Ribosomal_uL22_sf"/>
</dbReference>
<dbReference type="NCBIfam" id="TIGR01044">
    <property type="entry name" value="rplV_bact"/>
    <property type="match status" value="1"/>
</dbReference>
<dbReference type="PANTHER" id="PTHR13501">
    <property type="entry name" value="CHLOROPLAST 50S RIBOSOMAL PROTEIN L22-RELATED"/>
    <property type="match status" value="1"/>
</dbReference>
<dbReference type="PANTHER" id="PTHR13501:SF10">
    <property type="entry name" value="LARGE RIBOSOMAL SUBUNIT PROTEIN UL22M"/>
    <property type="match status" value="1"/>
</dbReference>
<dbReference type="Pfam" id="PF00237">
    <property type="entry name" value="Ribosomal_L22"/>
    <property type="match status" value="1"/>
</dbReference>
<dbReference type="SUPFAM" id="SSF54843">
    <property type="entry name" value="Ribosomal protein L22"/>
    <property type="match status" value="1"/>
</dbReference>
<dbReference type="PROSITE" id="PS00464">
    <property type="entry name" value="RIBOSOMAL_L22"/>
    <property type="match status" value="1"/>
</dbReference>
<accession>Q9MTI6</accession>